<protein>
    <recommendedName>
        <fullName>Protein archease</fullName>
    </recommendedName>
    <alternativeName>
        <fullName>Protein ZBTB8OS</fullName>
    </alternativeName>
</protein>
<dbReference type="EMBL" id="BC110257">
    <property type="protein sequence ID" value="AAI10258.1"/>
    <property type="molecule type" value="mRNA"/>
</dbReference>
<dbReference type="EMBL" id="EE251558">
    <property type="status" value="NOT_ANNOTATED_CDS"/>
    <property type="molecule type" value="mRNA"/>
</dbReference>
<dbReference type="RefSeq" id="NP_001069756.1">
    <molecule id="Q2YDE7-2"/>
    <property type="nucleotide sequence ID" value="NM_001076288.2"/>
</dbReference>
<dbReference type="RefSeq" id="XP_005203056.1">
    <molecule id="Q2YDE7-1"/>
    <property type="nucleotide sequence ID" value="XM_005202999.4"/>
</dbReference>
<dbReference type="SMR" id="Q2YDE7"/>
<dbReference type="FunCoup" id="Q2YDE7">
    <property type="interactions" value="1399"/>
</dbReference>
<dbReference type="STRING" id="9913.ENSBTAP00000038735"/>
<dbReference type="PaxDb" id="9913-ENSBTAP00000038735"/>
<dbReference type="Ensembl" id="ENSBTAT00000038929.5">
    <molecule id="Q2YDE7-2"/>
    <property type="protein sequence ID" value="ENSBTAP00000038735.3"/>
    <property type="gene ID" value="ENSBTAG00000027159.6"/>
</dbReference>
<dbReference type="Ensembl" id="ENSBTAT00000133992.1">
    <molecule id="Q2YDE7-1"/>
    <property type="protein sequence ID" value="ENSBTAP00000092829.1"/>
    <property type="gene ID" value="ENSBTAG00000027159.6"/>
</dbReference>
<dbReference type="GeneID" id="613795"/>
<dbReference type="KEGG" id="bta:613795"/>
<dbReference type="CTD" id="339487"/>
<dbReference type="VEuPathDB" id="HostDB:ENSBTAG00000027159"/>
<dbReference type="eggNOG" id="KOG4528">
    <property type="taxonomic scope" value="Eukaryota"/>
</dbReference>
<dbReference type="GeneTree" id="ENSGT00390000003245"/>
<dbReference type="HOGENOM" id="CLU_111362_0_0_1"/>
<dbReference type="InParanoid" id="Q2YDE7"/>
<dbReference type="OMA" id="AITYHKM"/>
<dbReference type="OrthoDB" id="2190767at2759"/>
<dbReference type="TreeFam" id="TF105957"/>
<dbReference type="Proteomes" id="UP000009136">
    <property type="component" value="Chromosome 2"/>
</dbReference>
<dbReference type="Bgee" id="ENSBTAG00000027159">
    <property type="expression patterns" value="Expressed in spermatocyte and 108 other cell types or tissues"/>
</dbReference>
<dbReference type="GO" id="GO:0072669">
    <property type="term" value="C:tRNA-splicing ligase complex"/>
    <property type="evidence" value="ECO:0000250"/>
    <property type="project" value="UniProtKB"/>
</dbReference>
<dbReference type="GO" id="GO:0046872">
    <property type="term" value="F:metal ion binding"/>
    <property type="evidence" value="ECO:0007669"/>
    <property type="project" value="UniProtKB-KW"/>
</dbReference>
<dbReference type="GO" id="GO:0006388">
    <property type="term" value="P:tRNA splicing, via endonucleolytic cleavage and ligation"/>
    <property type="evidence" value="ECO:0000250"/>
    <property type="project" value="UniProtKB"/>
</dbReference>
<dbReference type="FunFam" id="3.55.10.10:FF:000001">
    <property type="entry name" value="protein archease isoform X1"/>
    <property type="match status" value="1"/>
</dbReference>
<dbReference type="Gene3D" id="3.55.10.10">
    <property type="entry name" value="Archease domain"/>
    <property type="match status" value="1"/>
</dbReference>
<dbReference type="InterPro" id="IPR002804">
    <property type="entry name" value="Archease"/>
</dbReference>
<dbReference type="InterPro" id="IPR023572">
    <property type="entry name" value="Archease_dom"/>
</dbReference>
<dbReference type="InterPro" id="IPR036820">
    <property type="entry name" value="Archease_dom_sf"/>
</dbReference>
<dbReference type="PANTHER" id="PTHR12682">
    <property type="entry name" value="ARCHEASE"/>
    <property type="match status" value="1"/>
</dbReference>
<dbReference type="PANTHER" id="PTHR12682:SF11">
    <property type="entry name" value="PROTEIN ARCHEASE"/>
    <property type="match status" value="1"/>
</dbReference>
<dbReference type="Pfam" id="PF01951">
    <property type="entry name" value="Archease"/>
    <property type="match status" value="1"/>
</dbReference>
<dbReference type="SUPFAM" id="SSF69819">
    <property type="entry name" value="MTH1598-like"/>
    <property type="match status" value="1"/>
</dbReference>
<name>ARCH_BOVIN</name>
<keyword id="KW-0007">Acetylation</keyword>
<keyword id="KW-0025">Alternative splicing</keyword>
<keyword id="KW-0106">Calcium</keyword>
<keyword id="KW-0479">Metal-binding</keyword>
<keyword id="KW-1185">Reference proteome</keyword>
<keyword id="KW-0819">tRNA processing</keyword>
<gene>
    <name type="primary">ZBTB8OS</name>
    <name type="synonym">ARCH</name>
</gene>
<feature type="initiator methionine" description="Removed" evidence="2">
    <location>
        <position position="1"/>
    </location>
</feature>
<feature type="chain" id="PRO_0000285949" description="Protein archease">
    <location>
        <begin position="2"/>
        <end position="167"/>
    </location>
</feature>
<feature type="binding site" evidence="1">
    <location>
        <position position="39"/>
    </location>
    <ligand>
        <name>Ca(2+)</name>
        <dbReference type="ChEBI" id="CHEBI:29108"/>
    </ligand>
</feature>
<feature type="binding site" evidence="1">
    <location>
        <position position="166"/>
    </location>
    <ligand>
        <name>Ca(2+)</name>
        <dbReference type="ChEBI" id="CHEBI:29108"/>
    </ligand>
</feature>
<feature type="binding site" evidence="1">
    <location>
        <position position="167"/>
    </location>
    <ligand>
        <name>Ca(2+)</name>
        <dbReference type="ChEBI" id="CHEBI:29108"/>
    </ligand>
</feature>
<feature type="modified residue" description="N-acetylalanine" evidence="2">
    <location>
        <position position="2"/>
    </location>
</feature>
<feature type="splice variant" id="VSP_024925" description="In isoform 2." evidence="3">
    <original>GTEVKAITYSAMQVYNEEKPEVFVIIDI</original>
    <variation>MPAAAAAASRFSRVRLCVTPYTAAHQAPPSLGFSRELKSKQ</variation>
    <location>
        <begin position="140"/>
        <end position="167"/>
    </location>
</feature>
<organism>
    <name type="scientific">Bos taurus</name>
    <name type="common">Bovine</name>
    <dbReference type="NCBI Taxonomy" id="9913"/>
    <lineage>
        <taxon>Eukaryota</taxon>
        <taxon>Metazoa</taxon>
        <taxon>Chordata</taxon>
        <taxon>Craniata</taxon>
        <taxon>Vertebrata</taxon>
        <taxon>Euteleostomi</taxon>
        <taxon>Mammalia</taxon>
        <taxon>Eutheria</taxon>
        <taxon>Laurasiatheria</taxon>
        <taxon>Artiodactyla</taxon>
        <taxon>Ruminantia</taxon>
        <taxon>Pecora</taxon>
        <taxon>Bovidae</taxon>
        <taxon>Bovinae</taxon>
        <taxon>Bos</taxon>
    </lineage>
</organism>
<proteinExistence type="evidence at transcript level"/>
<accession>Q2YDE7</accession>
<reference key="1">
    <citation type="submission" date="2005-11" db="EMBL/GenBank/DDBJ databases">
        <authorList>
            <consortium name="NIH - Mammalian Gene Collection (MGC) project"/>
        </authorList>
    </citation>
    <scope>NUCLEOTIDE SEQUENCE [LARGE SCALE MRNA] (ISOFORMS 1 AND 2)</scope>
    <source>
        <strain>Crossbred X Angus</strain>
        <tissue>Liver</tissue>
    </source>
</reference>
<evidence type="ECO:0000250" key="1"/>
<evidence type="ECO:0000250" key="2">
    <source>
        <dbReference type="UniProtKB" id="Q8IWT0"/>
    </source>
</evidence>
<evidence type="ECO:0000303" key="3">
    <source ref="1"/>
</evidence>
<evidence type="ECO:0000305" key="4"/>
<sequence>MALEGEDVRDYNLTEEQKAIKAKYPPVSRKYEYLDHTADVQLHAWGDTLEEAFEQCAMAMFGYMTDTGTVEPLQTIEVETQGDDLQSLLFHFLDEWLYKFSADEFFIPREVKVLNIDQRNFKIRSIGWGEEFSLSKHPQGTEVKAITYSAMQVYNEEKPEVFVIIDI</sequence>
<comment type="function">
    <text evidence="1">Component of the tRNA-splicing ligase complex required to facilitate the enzymatic turnover of catalytic subunit RTCB. Together with DDX1, acts by facilitating the guanylylation of RTCB, a key intermediate step in tRNA ligation (By similarity).</text>
</comment>
<comment type="subunit">
    <text evidence="1">Component of the tRNA-splicing ligase complex.</text>
</comment>
<comment type="alternative products">
    <event type="alternative splicing"/>
    <isoform>
        <id>Q2YDE7-1</id>
        <name>1</name>
        <sequence type="displayed"/>
    </isoform>
    <isoform>
        <id>Q2YDE7-2</id>
        <name>2</name>
        <sequence type="described" ref="VSP_024925"/>
    </isoform>
</comment>
<comment type="similarity">
    <text evidence="4">Belongs to the archease family.</text>
</comment>